<gene>
    <name type="primary">trpC1</name>
    <name type="synonym">trpC</name>
    <name type="ordered locus">SCO2039</name>
    <name type="ORF">SC4G6.08c</name>
</gene>
<keyword id="KW-0028">Amino-acid biosynthesis</keyword>
<keyword id="KW-0057">Aromatic amino acid biosynthesis</keyword>
<keyword id="KW-0210">Decarboxylase</keyword>
<keyword id="KW-0456">Lyase</keyword>
<keyword id="KW-1185">Reference proteome</keyword>
<keyword id="KW-0822">Tryptophan biosynthesis</keyword>
<feature type="chain" id="PRO_0000154259" description="Indole-3-glycerol phosphate synthase 1">
    <location>
        <begin position="1"/>
        <end position="269"/>
    </location>
</feature>
<feature type="sequence conflict" description="In Ref. 1; AAC63500." evidence="1" ref="1">
    <original>E</original>
    <variation>V</variation>
    <location>
        <position position="29"/>
    </location>
</feature>
<evidence type="ECO:0000305" key="1"/>
<comment type="catalytic activity">
    <reaction>
        <text>1-(2-carboxyphenylamino)-1-deoxy-D-ribulose 5-phosphate + H(+) = (1S,2R)-1-C-(indol-3-yl)glycerol 3-phosphate + CO2 + H2O</text>
        <dbReference type="Rhea" id="RHEA:23476"/>
        <dbReference type="ChEBI" id="CHEBI:15377"/>
        <dbReference type="ChEBI" id="CHEBI:15378"/>
        <dbReference type="ChEBI" id="CHEBI:16526"/>
        <dbReference type="ChEBI" id="CHEBI:58613"/>
        <dbReference type="ChEBI" id="CHEBI:58866"/>
        <dbReference type="EC" id="4.1.1.48"/>
    </reaction>
</comment>
<comment type="pathway">
    <text>Amino-acid biosynthesis; L-tryptophan biosynthesis; L-tryptophan from chorismate: step 4/5.</text>
</comment>
<comment type="similarity">
    <text evidence="1">Belongs to the TrpC family.</text>
</comment>
<name>TRPC1_STRCO</name>
<dbReference type="EC" id="4.1.1.48"/>
<dbReference type="EMBL" id="AF054585">
    <property type="protein sequence ID" value="AAC63500.1"/>
    <property type="molecule type" value="Genomic_DNA"/>
</dbReference>
<dbReference type="EMBL" id="AL939111">
    <property type="protein sequence ID" value="CAB51431.1"/>
    <property type="molecule type" value="Genomic_DNA"/>
</dbReference>
<dbReference type="PIR" id="T35068">
    <property type="entry name" value="T35068"/>
</dbReference>
<dbReference type="RefSeq" id="NP_626299.1">
    <property type="nucleotide sequence ID" value="NC_003888.3"/>
</dbReference>
<dbReference type="RefSeq" id="WP_011028110.1">
    <property type="nucleotide sequence ID" value="NZ_VNID01000001.1"/>
</dbReference>
<dbReference type="SMR" id="O68814"/>
<dbReference type="FunCoup" id="O68814">
    <property type="interactions" value="308"/>
</dbReference>
<dbReference type="STRING" id="100226.gene:17759637"/>
<dbReference type="PaxDb" id="100226-SCO2039"/>
<dbReference type="KEGG" id="sco:SCO2039"/>
<dbReference type="PATRIC" id="fig|100226.15.peg.2070"/>
<dbReference type="eggNOG" id="COG0134">
    <property type="taxonomic scope" value="Bacteria"/>
</dbReference>
<dbReference type="HOGENOM" id="CLU_034247_0_0_11"/>
<dbReference type="InParanoid" id="O68814"/>
<dbReference type="OrthoDB" id="9804217at2"/>
<dbReference type="PhylomeDB" id="O68814"/>
<dbReference type="UniPathway" id="UPA00035">
    <property type="reaction ID" value="UER00043"/>
</dbReference>
<dbReference type="Proteomes" id="UP000001973">
    <property type="component" value="Chromosome"/>
</dbReference>
<dbReference type="GO" id="GO:0004425">
    <property type="term" value="F:indole-3-glycerol-phosphate synthase activity"/>
    <property type="evidence" value="ECO:0000318"/>
    <property type="project" value="GO_Central"/>
</dbReference>
<dbReference type="GO" id="GO:0004640">
    <property type="term" value="F:phosphoribosylanthranilate isomerase activity"/>
    <property type="evidence" value="ECO:0000318"/>
    <property type="project" value="GO_Central"/>
</dbReference>
<dbReference type="GO" id="GO:0000162">
    <property type="term" value="P:L-tryptophan biosynthetic process"/>
    <property type="evidence" value="ECO:0000318"/>
    <property type="project" value="GO_Central"/>
</dbReference>
<dbReference type="CDD" id="cd00331">
    <property type="entry name" value="IGPS"/>
    <property type="match status" value="1"/>
</dbReference>
<dbReference type="FunFam" id="3.20.20.70:FF:000024">
    <property type="entry name" value="Indole-3-glycerol phosphate synthase"/>
    <property type="match status" value="1"/>
</dbReference>
<dbReference type="Gene3D" id="3.20.20.70">
    <property type="entry name" value="Aldolase class I"/>
    <property type="match status" value="1"/>
</dbReference>
<dbReference type="HAMAP" id="MF_00134_A">
    <property type="entry name" value="IGPS_A"/>
    <property type="match status" value="1"/>
</dbReference>
<dbReference type="HAMAP" id="MF_00134_B">
    <property type="entry name" value="IGPS_B"/>
    <property type="match status" value="1"/>
</dbReference>
<dbReference type="InterPro" id="IPR013785">
    <property type="entry name" value="Aldolase_TIM"/>
</dbReference>
<dbReference type="InterPro" id="IPR045186">
    <property type="entry name" value="Indole-3-glycerol_P_synth"/>
</dbReference>
<dbReference type="InterPro" id="IPR013798">
    <property type="entry name" value="Indole-3-glycerol_P_synth_dom"/>
</dbReference>
<dbReference type="InterPro" id="IPR001468">
    <property type="entry name" value="Indole-3-GlycerolPSynthase_CS"/>
</dbReference>
<dbReference type="InterPro" id="IPR011060">
    <property type="entry name" value="RibuloseP-bd_barrel"/>
</dbReference>
<dbReference type="NCBIfam" id="NF001369">
    <property type="entry name" value="PRK00278.1-1"/>
    <property type="match status" value="1"/>
</dbReference>
<dbReference type="NCBIfam" id="NF001377">
    <property type="entry name" value="PRK00278.2-4"/>
    <property type="match status" value="1"/>
</dbReference>
<dbReference type="PANTHER" id="PTHR22854:SF2">
    <property type="entry name" value="INDOLE-3-GLYCEROL-PHOSPHATE SYNTHASE"/>
    <property type="match status" value="1"/>
</dbReference>
<dbReference type="PANTHER" id="PTHR22854">
    <property type="entry name" value="TRYPTOPHAN BIOSYNTHESIS PROTEIN"/>
    <property type="match status" value="1"/>
</dbReference>
<dbReference type="Pfam" id="PF00218">
    <property type="entry name" value="IGPS"/>
    <property type="match status" value="1"/>
</dbReference>
<dbReference type="SUPFAM" id="SSF51366">
    <property type="entry name" value="Ribulose-phoshate binding barrel"/>
    <property type="match status" value="1"/>
</dbReference>
<dbReference type="PROSITE" id="PS00614">
    <property type="entry name" value="IGPS"/>
    <property type="match status" value="1"/>
</dbReference>
<organism>
    <name type="scientific">Streptomyces coelicolor (strain ATCC BAA-471 / A3(2) / M145)</name>
    <dbReference type="NCBI Taxonomy" id="100226"/>
    <lineage>
        <taxon>Bacteria</taxon>
        <taxon>Bacillati</taxon>
        <taxon>Actinomycetota</taxon>
        <taxon>Actinomycetes</taxon>
        <taxon>Kitasatosporales</taxon>
        <taxon>Streptomycetaceae</taxon>
        <taxon>Streptomyces</taxon>
        <taxon>Streptomyces albidoflavus group</taxon>
    </lineage>
</organism>
<protein>
    <recommendedName>
        <fullName>Indole-3-glycerol phosphate synthase 1</fullName>
        <shortName>IGPS 1</shortName>
        <ecNumber>4.1.1.48</ecNumber>
    </recommendedName>
</protein>
<proteinExistence type="inferred from homology"/>
<reference key="1">
    <citation type="journal article" date="1999" name="Mol. Microbiol.">
        <title>The expression of the trpD, trpC and trpBA genes of Streptomyces coelicolor A3(2) is regulated by growth rate and growth phase but not by feedback repression.</title>
        <authorList>
            <person name="Hu D.S.-J."/>
            <person name="Hood D.W."/>
            <person name="Heidstra R."/>
            <person name="Hodgson D.A."/>
        </authorList>
    </citation>
    <scope>NUCLEOTIDE SEQUENCE [GENOMIC DNA]</scope>
    <source>
        <strain>A3(2) / NRRL B-16638</strain>
    </source>
</reference>
<reference key="2">
    <citation type="journal article" date="2002" name="Nature">
        <title>Complete genome sequence of the model actinomycete Streptomyces coelicolor A3(2).</title>
        <authorList>
            <person name="Bentley S.D."/>
            <person name="Chater K.F."/>
            <person name="Cerdeno-Tarraga A.-M."/>
            <person name="Challis G.L."/>
            <person name="Thomson N.R."/>
            <person name="James K.D."/>
            <person name="Harris D.E."/>
            <person name="Quail M.A."/>
            <person name="Kieser H."/>
            <person name="Harper D."/>
            <person name="Bateman A."/>
            <person name="Brown S."/>
            <person name="Chandra G."/>
            <person name="Chen C.W."/>
            <person name="Collins M."/>
            <person name="Cronin A."/>
            <person name="Fraser A."/>
            <person name="Goble A."/>
            <person name="Hidalgo J."/>
            <person name="Hornsby T."/>
            <person name="Howarth S."/>
            <person name="Huang C.-H."/>
            <person name="Kieser T."/>
            <person name="Larke L."/>
            <person name="Murphy L.D."/>
            <person name="Oliver K."/>
            <person name="O'Neil S."/>
            <person name="Rabbinowitsch E."/>
            <person name="Rajandream M.A."/>
            <person name="Rutherford K.M."/>
            <person name="Rutter S."/>
            <person name="Seeger K."/>
            <person name="Saunders D."/>
            <person name="Sharp S."/>
            <person name="Squares R."/>
            <person name="Squares S."/>
            <person name="Taylor K."/>
            <person name="Warren T."/>
            <person name="Wietzorrek A."/>
            <person name="Woodward J.R."/>
            <person name="Barrell B.G."/>
            <person name="Parkhill J."/>
            <person name="Hopwood D.A."/>
        </authorList>
    </citation>
    <scope>NUCLEOTIDE SEQUENCE [LARGE SCALE GENOMIC DNA]</scope>
    <source>
        <strain>ATCC BAA-471 / A3(2) / M145</strain>
    </source>
</reference>
<sequence>MSVLDEIIDGVRADLAERQARVSLDELKERAAKARPAKDGVAALRGDGVKVICEVKRSSPSKGALAAIADPAGLAADYEAGGAAVISVLTEERRFGGSLADLDSVRARVDIPVLRKDFIVTSYQLWEARAHGADLVLLIVAALEQPALESLIERAESIGLTPLVEVHDEDEVERAVDAGAKVIGVNARNLKTLEVDRGTFERVAPEIPAHIVKVAESGVRGPHDLIAYANEGADAVLVGESLVTGRDPKTAVSDLVAAGEHPALRHGRS</sequence>
<accession>O68814</accession>
<accession>Q9S2U6</accession>